<accession>A8A8B3</accession>
<evidence type="ECO:0000250" key="1">
    <source>
        <dbReference type="UniProtKB" id="P50389"/>
    </source>
</evidence>
<evidence type="ECO:0000255" key="2">
    <source>
        <dbReference type="HAMAP-Rule" id="MF_01627"/>
    </source>
</evidence>
<name>DEOD_ECOHS</name>
<proteinExistence type="inferred from homology"/>
<reference key="1">
    <citation type="journal article" date="2008" name="J. Bacteriol.">
        <title>The pangenome structure of Escherichia coli: comparative genomic analysis of E. coli commensal and pathogenic isolates.</title>
        <authorList>
            <person name="Rasko D.A."/>
            <person name="Rosovitz M.J."/>
            <person name="Myers G.S.A."/>
            <person name="Mongodin E.F."/>
            <person name="Fricke W.F."/>
            <person name="Gajer P."/>
            <person name="Crabtree J."/>
            <person name="Sebaihia M."/>
            <person name="Thomson N.R."/>
            <person name="Chaudhuri R."/>
            <person name="Henderson I.R."/>
            <person name="Sperandio V."/>
            <person name="Ravel J."/>
        </authorList>
    </citation>
    <scope>NUCLEOTIDE SEQUENCE [LARGE SCALE GENOMIC DNA]</scope>
    <source>
        <strain>HS</strain>
    </source>
</reference>
<dbReference type="EC" id="2.4.2.1" evidence="2"/>
<dbReference type="EMBL" id="CP000802">
    <property type="protein sequence ID" value="ABV08767.1"/>
    <property type="molecule type" value="Genomic_DNA"/>
</dbReference>
<dbReference type="RefSeq" id="WP_000224877.1">
    <property type="nucleotide sequence ID" value="NC_009800.1"/>
</dbReference>
<dbReference type="SMR" id="A8A8B3"/>
<dbReference type="GeneID" id="93777460"/>
<dbReference type="KEGG" id="ecx:EcHS_A4619"/>
<dbReference type="HOGENOM" id="CLU_068457_2_0_6"/>
<dbReference type="GO" id="GO:0005829">
    <property type="term" value="C:cytosol"/>
    <property type="evidence" value="ECO:0007669"/>
    <property type="project" value="TreeGrafter"/>
</dbReference>
<dbReference type="GO" id="GO:0004731">
    <property type="term" value="F:purine-nucleoside phosphorylase activity"/>
    <property type="evidence" value="ECO:0007669"/>
    <property type="project" value="UniProtKB-UniRule"/>
</dbReference>
<dbReference type="GO" id="GO:0006152">
    <property type="term" value="P:purine nucleoside catabolic process"/>
    <property type="evidence" value="ECO:0007669"/>
    <property type="project" value="TreeGrafter"/>
</dbReference>
<dbReference type="CDD" id="cd09006">
    <property type="entry name" value="PNP_EcPNPI-like"/>
    <property type="match status" value="1"/>
</dbReference>
<dbReference type="FunFam" id="3.40.50.1580:FF:000002">
    <property type="entry name" value="Purine nucleoside phosphorylase DeoD-type"/>
    <property type="match status" value="1"/>
</dbReference>
<dbReference type="Gene3D" id="3.40.50.1580">
    <property type="entry name" value="Nucleoside phosphorylase domain"/>
    <property type="match status" value="1"/>
</dbReference>
<dbReference type="HAMAP" id="MF_01627">
    <property type="entry name" value="Pur_nucleosid_phosp"/>
    <property type="match status" value="1"/>
</dbReference>
<dbReference type="InterPro" id="IPR004402">
    <property type="entry name" value="DeoD-type"/>
</dbReference>
<dbReference type="InterPro" id="IPR018016">
    <property type="entry name" value="Nucleoside_phosphorylase_CS"/>
</dbReference>
<dbReference type="InterPro" id="IPR000845">
    <property type="entry name" value="Nucleoside_phosphorylase_d"/>
</dbReference>
<dbReference type="InterPro" id="IPR035994">
    <property type="entry name" value="Nucleoside_phosphorylase_sf"/>
</dbReference>
<dbReference type="NCBIfam" id="TIGR00107">
    <property type="entry name" value="deoD"/>
    <property type="match status" value="1"/>
</dbReference>
<dbReference type="NCBIfam" id="NF004489">
    <property type="entry name" value="PRK05819.1"/>
    <property type="match status" value="1"/>
</dbReference>
<dbReference type="NCBIfam" id="NF009914">
    <property type="entry name" value="PRK13374.1"/>
    <property type="match status" value="1"/>
</dbReference>
<dbReference type="PANTHER" id="PTHR43691:SF2">
    <property type="entry name" value="PURINE NUCLEOSIDE PHOSPHORYLASE DEOD-TYPE"/>
    <property type="match status" value="1"/>
</dbReference>
<dbReference type="PANTHER" id="PTHR43691">
    <property type="entry name" value="URIDINE PHOSPHORYLASE"/>
    <property type="match status" value="1"/>
</dbReference>
<dbReference type="Pfam" id="PF01048">
    <property type="entry name" value="PNP_UDP_1"/>
    <property type="match status" value="1"/>
</dbReference>
<dbReference type="SUPFAM" id="SSF53167">
    <property type="entry name" value="Purine and uridine phosphorylases"/>
    <property type="match status" value="1"/>
</dbReference>
<dbReference type="PROSITE" id="PS01232">
    <property type="entry name" value="PNP_UDP_1"/>
    <property type="match status" value="1"/>
</dbReference>
<protein>
    <recommendedName>
        <fullName evidence="2">Purine nucleoside phosphorylase DeoD-type</fullName>
        <shortName evidence="2">PNP</shortName>
        <ecNumber evidence="2">2.4.2.1</ecNumber>
    </recommendedName>
</protein>
<gene>
    <name evidence="2" type="primary">deoD</name>
    <name type="ordered locus">EcHS_A4619</name>
</gene>
<sequence>MATPHINAEMGDFADVVLMPGDPLRAKYIAETFLEDAREVNNVRGMLGFTGTYKGRKISVMGHGMGIPSCSIYTKELITDFGVKKIIRVGSCGAVLPHVKLRDVVIGMGACTDSKVNRIRFKDHDFAAIADFDMVRNAVDAAKALGIDARVGNLFSADLFYSPDGEMFDVMEKYGILGVEMEAAGIYGVAAEFGAKALTICTVSDHIRTHEQTTAAERQTTFNDMIKIALESVLLGDKE</sequence>
<comment type="function">
    <text evidence="2">Catalyzes the reversible phosphorolytic breakdown of the N-glycosidic bond in the beta-(deoxy)ribonucleoside molecules, with the formation of the corresponding free purine bases and pentose-1-phosphate.</text>
</comment>
<comment type="catalytic activity">
    <reaction evidence="2">
        <text>a purine D-ribonucleoside + phosphate = a purine nucleobase + alpha-D-ribose 1-phosphate</text>
        <dbReference type="Rhea" id="RHEA:19805"/>
        <dbReference type="ChEBI" id="CHEBI:26386"/>
        <dbReference type="ChEBI" id="CHEBI:43474"/>
        <dbReference type="ChEBI" id="CHEBI:57720"/>
        <dbReference type="ChEBI" id="CHEBI:142355"/>
        <dbReference type="EC" id="2.4.2.1"/>
    </reaction>
</comment>
<comment type="catalytic activity">
    <reaction evidence="2">
        <text>a purine 2'-deoxy-D-ribonucleoside + phosphate = a purine nucleobase + 2-deoxy-alpha-D-ribose 1-phosphate</text>
        <dbReference type="Rhea" id="RHEA:36431"/>
        <dbReference type="ChEBI" id="CHEBI:26386"/>
        <dbReference type="ChEBI" id="CHEBI:43474"/>
        <dbReference type="ChEBI" id="CHEBI:57259"/>
        <dbReference type="ChEBI" id="CHEBI:142361"/>
        <dbReference type="EC" id="2.4.2.1"/>
    </reaction>
</comment>
<comment type="subunit">
    <text evidence="2">Homohexamer; trimer of homodimers.</text>
</comment>
<comment type="similarity">
    <text evidence="2">Belongs to the PNP/UDP phosphorylase family.</text>
</comment>
<organism>
    <name type="scientific">Escherichia coli O9:H4 (strain HS)</name>
    <dbReference type="NCBI Taxonomy" id="331112"/>
    <lineage>
        <taxon>Bacteria</taxon>
        <taxon>Pseudomonadati</taxon>
        <taxon>Pseudomonadota</taxon>
        <taxon>Gammaproteobacteria</taxon>
        <taxon>Enterobacterales</taxon>
        <taxon>Enterobacteriaceae</taxon>
        <taxon>Escherichia</taxon>
    </lineage>
</organism>
<keyword id="KW-0007">Acetylation</keyword>
<keyword id="KW-0328">Glycosyltransferase</keyword>
<keyword id="KW-0808">Transferase</keyword>
<feature type="chain" id="PRO_1000069626" description="Purine nucleoside phosphorylase DeoD-type">
    <location>
        <begin position="1"/>
        <end position="239"/>
    </location>
</feature>
<feature type="active site" description="Proton donor" evidence="2">
    <location>
        <position position="205"/>
    </location>
</feature>
<feature type="binding site" evidence="1">
    <location>
        <position position="5"/>
    </location>
    <ligand>
        <name>a purine D-ribonucleoside</name>
        <dbReference type="ChEBI" id="CHEBI:142355"/>
        <note>ligand shared between dimeric partners</note>
    </ligand>
</feature>
<feature type="binding site" description="in other chain" evidence="1">
    <location>
        <position position="21"/>
    </location>
    <ligand>
        <name>phosphate</name>
        <dbReference type="ChEBI" id="CHEBI:43474"/>
        <note>ligand shared between dimeric partners</note>
    </ligand>
</feature>
<feature type="binding site" description="in other chain" evidence="1">
    <location>
        <position position="25"/>
    </location>
    <ligand>
        <name>phosphate</name>
        <dbReference type="ChEBI" id="CHEBI:43474"/>
        <note>ligand shared between dimeric partners</note>
    </ligand>
</feature>
<feature type="binding site" evidence="1">
    <location>
        <position position="44"/>
    </location>
    <ligand>
        <name>phosphate</name>
        <dbReference type="ChEBI" id="CHEBI:43474"/>
        <note>ligand shared between dimeric partners</note>
    </ligand>
</feature>
<feature type="binding site" description="in other chain" evidence="1">
    <location>
        <begin position="88"/>
        <end position="91"/>
    </location>
    <ligand>
        <name>phosphate</name>
        <dbReference type="ChEBI" id="CHEBI:43474"/>
        <note>ligand shared between dimeric partners</note>
    </ligand>
</feature>
<feature type="binding site" description="in other chain" evidence="1">
    <location>
        <begin position="180"/>
        <end position="182"/>
    </location>
    <ligand>
        <name>a purine D-ribonucleoside</name>
        <dbReference type="ChEBI" id="CHEBI:142355"/>
        <note>ligand shared between dimeric partners</note>
    </ligand>
</feature>
<feature type="binding site" description="in other chain" evidence="1">
    <location>
        <begin position="204"/>
        <end position="205"/>
    </location>
    <ligand>
        <name>a purine D-ribonucleoside</name>
        <dbReference type="ChEBI" id="CHEBI:142355"/>
        <note>ligand shared between dimeric partners</note>
    </ligand>
</feature>
<feature type="site" description="Important for catalytic activity" evidence="2">
    <location>
        <position position="218"/>
    </location>
</feature>
<feature type="modified residue" description="N6-acetyllysine" evidence="2">
    <location>
        <position position="27"/>
    </location>
</feature>